<dbReference type="EC" id="2.1.1.163" evidence="1"/>
<dbReference type="EMBL" id="BA000043">
    <property type="protein sequence ID" value="BAD76496.1"/>
    <property type="molecule type" value="Genomic_DNA"/>
</dbReference>
<dbReference type="RefSeq" id="WP_011231696.1">
    <property type="nucleotide sequence ID" value="NC_006510.1"/>
</dbReference>
<dbReference type="SMR" id="Q5KXU0"/>
<dbReference type="STRING" id="235909.GK2211"/>
<dbReference type="GeneID" id="32064063"/>
<dbReference type="KEGG" id="gka:GK2211"/>
<dbReference type="eggNOG" id="COG2226">
    <property type="taxonomic scope" value="Bacteria"/>
</dbReference>
<dbReference type="HOGENOM" id="CLU_037990_0_0_9"/>
<dbReference type="UniPathway" id="UPA00079">
    <property type="reaction ID" value="UER00169"/>
</dbReference>
<dbReference type="Proteomes" id="UP000001172">
    <property type="component" value="Chromosome"/>
</dbReference>
<dbReference type="GO" id="GO:0043770">
    <property type="term" value="F:demethylmenaquinone methyltransferase activity"/>
    <property type="evidence" value="ECO:0007669"/>
    <property type="project" value="UniProtKB-UniRule"/>
</dbReference>
<dbReference type="GO" id="GO:0009234">
    <property type="term" value="P:menaquinone biosynthetic process"/>
    <property type="evidence" value="ECO:0007669"/>
    <property type="project" value="UniProtKB-UniRule"/>
</dbReference>
<dbReference type="GO" id="GO:0032259">
    <property type="term" value="P:methylation"/>
    <property type="evidence" value="ECO:0007669"/>
    <property type="project" value="UniProtKB-KW"/>
</dbReference>
<dbReference type="CDD" id="cd02440">
    <property type="entry name" value="AdoMet_MTases"/>
    <property type="match status" value="1"/>
</dbReference>
<dbReference type="FunFam" id="3.40.50.150:FF:000086">
    <property type="entry name" value="Demethylmenaquinone methyltransferase"/>
    <property type="match status" value="1"/>
</dbReference>
<dbReference type="Gene3D" id="3.40.50.150">
    <property type="entry name" value="Vaccinia Virus protein VP39"/>
    <property type="match status" value="1"/>
</dbReference>
<dbReference type="HAMAP" id="MF_01813">
    <property type="entry name" value="MenG_UbiE_methyltr"/>
    <property type="match status" value="1"/>
</dbReference>
<dbReference type="InterPro" id="IPR014122">
    <property type="entry name" value="MenG_heptapren"/>
</dbReference>
<dbReference type="InterPro" id="IPR029063">
    <property type="entry name" value="SAM-dependent_MTases_sf"/>
</dbReference>
<dbReference type="InterPro" id="IPR004033">
    <property type="entry name" value="UbiE/COQ5_MeTrFase"/>
</dbReference>
<dbReference type="InterPro" id="IPR023576">
    <property type="entry name" value="UbiE/COQ5_MeTrFase_CS"/>
</dbReference>
<dbReference type="NCBIfam" id="TIGR02752">
    <property type="entry name" value="MenG_heptapren"/>
    <property type="match status" value="1"/>
</dbReference>
<dbReference type="NCBIfam" id="TIGR01934">
    <property type="entry name" value="MenG_MenH_UbiE"/>
    <property type="match status" value="1"/>
</dbReference>
<dbReference type="NCBIfam" id="NF001243">
    <property type="entry name" value="PRK00216.1-4"/>
    <property type="match status" value="1"/>
</dbReference>
<dbReference type="NCBIfam" id="NF001244">
    <property type="entry name" value="PRK00216.1-5"/>
    <property type="match status" value="1"/>
</dbReference>
<dbReference type="PANTHER" id="PTHR43591:SF24">
    <property type="entry name" value="2-METHOXY-6-POLYPRENYL-1,4-BENZOQUINOL METHYLASE, MITOCHONDRIAL"/>
    <property type="match status" value="1"/>
</dbReference>
<dbReference type="PANTHER" id="PTHR43591">
    <property type="entry name" value="METHYLTRANSFERASE"/>
    <property type="match status" value="1"/>
</dbReference>
<dbReference type="Pfam" id="PF01209">
    <property type="entry name" value="Ubie_methyltran"/>
    <property type="match status" value="1"/>
</dbReference>
<dbReference type="SUPFAM" id="SSF53335">
    <property type="entry name" value="S-adenosyl-L-methionine-dependent methyltransferases"/>
    <property type="match status" value="1"/>
</dbReference>
<dbReference type="PROSITE" id="PS51608">
    <property type="entry name" value="SAM_MT_UBIE"/>
    <property type="match status" value="1"/>
</dbReference>
<dbReference type="PROSITE" id="PS01183">
    <property type="entry name" value="UBIE_1"/>
    <property type="match status" value="1"/>
</dbReference>
<dbReference type="PROSITE" id="PS01184">
    <property type="entry name" value="UBIE_2"/>
    <property type="match status" value="1"/>
</dbReference>
<feature type="chain" id="PRO_0000193279" description="Demethylmenaquinone methyltransferase">
    <location>
        <begin position="1"/>
        <end position="234"/>
    </location>
</feature>
<feature type="binding site" evidence="1">
    <location>
        <position position="58"/>
    </location>
    <ligand>
        <name>S-adenosyl-L-methionine</name>
        <dbReference type="ChEBI" id="CHEBI:59789"/>
    </ligand>
</feature>
<feature type="binding site" evidence="1">
    <location>
        <position position="79"/>
    </location>
    <ligand>
        <name>S-adenosyl-L-methionine</name>
        <dbReference type="ChEBI" id="CHEBI:59789"/>
    </ligand>
</feature>
<feature type="binding site" evidence="1">
    <location>
        <begin position="106"/>
        <end position="107"/>
    </location>
    <ligand>
        <name>S-adenosyl-L-methionine</name>
        <dbReference type="ChEBI" id="CHEBI:59789"/>
    </ligand>
</feature>
<gene>
    <name evidence="1" type="primary">menG</name>
    <name type="ordered locus">GK2211</name>
</gene>
<evidence type="ECO:0000255" key="1">
    <source>
        <dbReference type="HAMAP-Rule" id="MF_01813"/>
    </source>
</evidence>
<name>MENG_GEOKA</name>
<keyword id="KW-0474">Menaquinone biosynthesis</keyword>
<keyword id="KW-0489">Methyltransferase</keyword>
<keyword id="KW-1185">Reference proteome</keyword>
<keyword id="KW-0949">S-adenosyl-L-methionine</keyword>
<keyword id="KW-0808">Transferase</keyword>
<organism>
    <name type="scientific">Geobacillus kaustophilus (strain HTA426)</name>
    <dbReference type="NCBI Taxonomy" id="235909"/>
    <lineage>
        <taxon>Bacteria</taxon>
        <taxon>Bacillati</taxon>
        <taxon>Bacillota</taxon>
        <taxon>Bacilli</taxon>
        <taxon>Bacillales</taxon>
        <taxon>Anoxybacillaceae</taxon>
        <taxon>Geobacillus</taxon>
        <taxon>Geobacillus thermoleovorans group</taxon>
    </lineage>
</organism>
<comment type="function">
    <text evidence="1">Methyltransferase required for the conversion of demethylmenaquinol (DMKH2) to menaquinol (MKH2).</text>
</comment>
<comment type="catalytic activity">
    <reaction evidence="1">
        <text>a 2-demethylmenaquinol + S-adenosyl-L-methionine = a menaquinol + S-adenosyl-L-homocysteine + H(+)</text>
        <dbReference type="Rhea" id="RHEA:42640"/>
        <dbReference type="Rhea" id="RHEA-COMP:9539"/>
        <dbReference type="Rhea" id="RHEA-COMP:9563"/>
        <dbReference type="ChEBI" id="CHEBI:15378"/>
        <dbReference type="ChEBI" id="CHEBI:18151"/>
        <dbReference type="ChEBI" id="CHEBI:55437"/>
        <dbReference type="ChEBI" id="CHEBI:57856"/>
        <dbReference type="ChEBI" id="CHEBI:59789"/>
        <dbReference type="EC" id="2.1.1.163"/>
    </reaction>
</comment>
<comment type="pathway">
    <text evidence="1">Quinol/quinone metabolism; menaquinone biosynthesis; menaquinol from 1,4-dihydroxy-2-naphthoate: step 2/2.</text>
</comment>
<comment type="similarity">
    <text evidence="1">Belongs to the class I-like SAM-binding methyltransferase superfamily. MenG/UbiE family.</text>
</comment>
<sequence length="234" mass="27119">MHQSKEERVHRVFEKISAHYDRMNSVISFRRHLKWREDVMRRMNVQKGKRALDVCCGTADWAIALAEAVGPEGEVYGLDFSENMLKVGEQKVKARGLGNVKLIHGNAMQLPFPDNSFDYVTIGFGLRNVPDYMTVLKEMHRVTKPGGMTVCLETSQPTLFGFRQLYYFYFRFIMPLFGKLLAKSYEEYSWLQESAREFPGRDELAEMFREAGFVDVEVKPYTFGVAAMHLGYKR</sequence>
<accession>Q5KXU0</accession>
<reference key="1">
    <citation type="journal article" date="2004" name="Nucleic Acids Res.">
        <title>Thermoadaptation trait revealed by the genome sequence of thermophilic Geobacillus kaustophilus.</title>
        <authorList>
            <person name="Takami H."/>
            <person name="Takaki Y."/>
            <person name="Chee G.-J."/>
            <person name="Nishi S."/>
            <person name="Shimamura S."/>
            <person name="Suzuki H."/>
            <person name="Matsui S."/>
            <person name="Uchiyama I."/>
        </authorList>
    </citation>
    <scope>NUCLEOTIDE SEQUENCE [LARGE SCALE GENOMIC DNA]</scope>
    <source>
        <strain>HTA426</strain>
    </source>
</reference>
<protein>
    <recommendedName>
        <fullName evidence="1">Demethylmenaquinone methyltransferase</fullName>
        <ecNumber evidence="1">2.1.1.163</ecNumber>
    </recommendedName>
</protein>
<proteinExistence type="inferred from homology"/>